<comment type="function">
    <text evidence="1">Catalyzes the conversion of glucosamine-6-phosphate to glucosamine-1-phosphate.</text>
</comment>
<comment type="catalytic activity">
    <reaction evidence="1">
        <text>alpha-D-glucosamine 1-phosphate = D-glucosamine 6-phosphate</text>
        <dbReference type="Rhea" id="RHEA:23424"/>
        <dbReference type="ChEBI" id="CHEBI:58516"/>
        <dbReference type="ChEBI" id="CHEBI:58725"/>
        <dbReference type="EC" id="5.4.2.10"/>
    </reaction>
</comment>
<comment type="cofactor">
    <cofactor evidence="1">
        <name>Mg(2+)</name>
        <dbReference type="ChEBI" id="CHEBI:18420"/>
    </cofactor>
    <text evidence="1">Binds 1 Mg(2+) ion per subunit.</text>
</comment>
<comment type="PTM">
    <text evidence="1">Activated by phosphorylation.</text>
</comment>
<comment type="similarity">
    <text evidence="1">Belongs to the phosphohexose mutase family.</text>
</comment>
<protein>
    <recommendedName>
        <fullName evidence="1">Phosphoglucosamine mutase</fullName>
        <ecNumber evidence="1">5.4.2.10</ecNumber>
    </recommendedName>
</protein>
<name>GLMM_CLOAB</name>
<organism>
    <name type="scientific">Clostridium acetobutylicum (strain ATCC 824 / DSM 792 / JCM 1419 / IAM 19013 / LMG 5710 / NBRC 13948 / NRRL B-527 / VKM B-1787 / 2291 / W)</name>
    <dbReference type="NCBI Taxonomy" id="272562"/>
    <lineage>
        <taxon>Bacteria</taxon>
        <taxon>Bacillati</taxon>
        <taxon>Bacillota</taxon>
        <taxon>Clostridia</taxon>
        <taxon>Eubacteriales</taxon>
        <taxon>Clostridiaceae</taxon>
        <taxon>Clostridium</taxon>
    </lineage>
</organism>
<dbReference type="EC" id="5.4.2.10" evidence="1"/>
<dbReference type="EMBL" id="AE001437">
    <property type="protein sequence ID" value="AAK78464.1"/>
    <property type="molecule type" value="Genomic_DNA"/>
</dbReference>
<dbReference type="PIR" id="E96959">
    <property type="entry name" value="E96959"/>
</dbReference>
<dbReference type="RefSeq" id="NP_347124.1">
    <property type="nucleotide sequence ID" value="NC_003030.1"/>
</dbReference>
<dbReference type="RefSeq" id="WP_010963806.1">
    <property type="nucleotide sequence ID" value="NC_003030.1"/>
</dbReference>
<dbReference type="SMR" id="Q97LS0"/>
<dbReference type="STRING" id="272562.CA_C0484"/>
<dbReference type="DNASU" id="1116667"/>
<dbReference type="GeneID" id="44996993"/>
<dbReference type="KEGG" id="cac:CA_C0484"/>
<dbReference type="PATRIC" id="fig|272562.8.peg.683"/>
<dbReference type="eggNOG" id="COG1109">
    <property type="taxonomic scope" value="Bacteria"/>
</dbReference>
<dbReference type="HOGENOM" id="CLU_016950_7_0_9"/>
<dbReference type="OrthoDB" id="9806956at2"/>
<dbReference type="Proteomes" id="UP000000814">
    <property type="component" value="Chromosome"/>
</dbReference>
<dbReference type="GO" id="GO:0005829">
    <property type="term" value="C:cytosol"/>
    <property type="evidence" value="ECO:0007669"/>
    <property type="project" value="TreeGrafter"/>
</dbReference>
<dbReference type="GO" id="GO:0000287">
    <property type="term" value="F:magnesium ion binding"/>
    <property type="evidence" value="ECO:0007669"/>
    <property type="project" value="UniProtKB-UniRule"/>
</dbReference>
<dbReference type="GO" id="GO:0008966">
    <property type="term" value="F:phosphoglucosamine mutase activity"/>
    <property type="evidence" value="ECO:0007669"/>
    <property type="project" value="UniProtKB-UniRule"/>
</dbReference>
<dbReference type="GO" id="GO:0004615">
    <property type="term" value="F:phosphomannomutase activity"/>
    <property type="evidence" value="ECO:0007669"/>
    <property type="project" value="TreeGrafter"/>
</dbReference>
<dbReference type="GO" id="GO:0005975">
    <property type="term" value="P:carbohydrate metabolic process"/>
    <property type="evidence" value="ECO:0007669"/>
    <property type="project" value="InterPro"/>
</dbReference>
<dbReference type="GO" id="GO:0009252">
    <property type="term" value="P:peptidoglycan biosynthetic process"/>
    <property type="evidence" value="ECO:0007669"/>
    <property type="project" value="TreeGrafter"/>
</dbReference>
<dbReference type="GO" id="GO:0006048">
    <property type="term" value="P:UDP-N-acetylglucosamine biosynthetic process"/>
    <property type="evidence" value="ECO:0007669"/>
    <property type="project" value="TreeGrafter"/>
</dbReference>
<dbReference type="CDD" id="cd05802">
    <property type="entry name" value="GlmM"/>
    <property type="match status" value="1"/>
</dbReference>
<dbReference type="FunFam" id="3.30.310.50:FF:000001">
    <property type="entry name" value="Phosphoglucosamine mutase"/>
    <property type="match status" value="1"/>
</dbReference>
<dbReference type="FunFam" id="3.40.120.10:FF:000001">
    <property type="entry name" value="Phosphoglucosamine mutase"/>
    <property type="match status" value="1"/>
</dbReference>
<dbReference type="FunFam" id="3.40.120.10:FF:000002">
    <property type="entry name" value="Phosphoglucosamine mutase"/>
    <property type="match status" value="1"/>
</dbReference>
<dbReference type="Gene3D" id="3.40.120.10">
    <property type="entry name" value="Alpha-D-Glucose-1,6-Bisphosphate, subunit A, domain 3"/>
    <property type="match status" value="3"/>
</dbReference>
<dbReference type="Gene3D" id="3.30.310.50">
    <property type="entry name" value="Alpha-D-phosphohexomutase, C-terminal domain"/>
    <property type="match status" value="1"/>
</dbReference>
<dbReference type="HAMAP" id="MF_01554_B">
    <property type="entry name" value="GlmM_B"/>
    <property type="match status" value="1"/>
</dbReference>
<dbReference type="InterPro" id="IPR005844">
    <property type="entry name" value="A-D-PHexomutase_a/b/a-I"/>
</dbReference>
<dbReference type="InterPro" id="IPR016055">
    <property type="entry name" value="A-D-PHexomutase_a/b/a-I/II/III"/>
</dbReference>
<dbReference type="InterPro" id="IPR005845">
    <property type="entry name" value="A-D-PHexomutase_a/b/a-II"/>
</dbReference>
<dbReference type="InterPro" id="IPR005846">
    <property type="entry name" value="A-D-PHexomutase_a/b/a-III"/>
</dbReference>
<dbReference type="InterPro" id="IPR005843">
    <property type="entry name" value="A-D-PHexomutase_C"/>
</dbReference>
<dbReference type="InterPro" id="IPR036900">
    <property type="entry name" value="A-D-PHexomutase_C_sf"/>
</dbReference>
<dbReference type="InterPro" id="IPR016066">
    <property type="entry name" value="A-D-PHexomutase_CS"/>
</dbReference>
<dbReference type="InterPro" id="IPR005841">
    <property type="entry name" value="Alpha-D-phosphohexomutase_SF"/>
</dbReference>
<dbReference type="InterPro" id="IPR006352">
    <property type="entry name" value="GlmM_bact"/>
</dbReference>
<dbReference type="InterPro" id="IPR050060">
    <property type="entry name" value="Phosphoglucosamine_mutase"/>
</dbReference>
<dbReference type="NCBIfam" id="TIGR01455">
    <property type="entry name" value="glmM"/>
    <property type="match status" value="1"/>
</dbReference>
<dbReference type="NCBIfam" id="NF008139">
    <property type="entry name" value="PRK10887.1"/>
    <property type="match status" value="1"/>
</dbReference>
<dbReference type="PANTHER" id="PTHR42946:SF1">
    <property type="entry name" value="PHOSPHOGLUCOMUTASE (ALPHA-D-GLUCOSE-1,6-BISPHOSPHATE-DEPENDENT)"/>
    <property type="match status" value="1"/>
</dbReference>
<dbReference type="PANTHER" id="PTHR42946">
    <property type="entry name" value="PHOSPHOHEXOSE MUTASE"/>
    <property type="match status" value="1"/>
</dbReference>
<dbReference type="Pfam" id="PF02878">
    <property type="entry name" value="PGM_PMM_I"/>
    <property type="match status" value="1"/>
</dbReference>
<dbReference type="Pfam" id="PF02879">
    <property type="entry name" value="PGM_PMM_II"/>
    <property type="match status" value="1"/>
</dbReference>
<dbReference type="Pfam" id="PF02880">
    <property type="entry name" value="PGM_PMM_III"/>
    <property type="match status" value="1"/>
</dbReference>
<dbReference type="Pfam" id="PF00408">
    <property type="entry name" value="PGM_PMM_IV"/>
    <property type="match status" value="1"/>
</dbReference>
<dbReference type="PRINTS" id="PR00509">
    <property type="entry name" value="PGMPMM"/>
</dbReference>
<dbReference type="SUPFAM" id="SSF55957">
    <property type="entry name" value="Phosphoglucomutase, C-terminal domain"/>
    <property type="match status" value="1"/>
</dbReference>
<dbReference type="SUPFAM" id="SSF53738">
    <property type="entry name" value="Phosphoglucomutase, first 3 domains"/>
    <property type="match status" value="3"/>
</dbReference>
<dbReference type="PROSITE" id="PS00710">
    <property type="entry name" value="PGM_PMM"/>
    <property type="match status" value="1"/>
</dbReference>
<reference key="1">
    <citation type="journal article" date="2001" name="J. Bacteriol.">
        <title>Genome sequence and comparative analysis of the solvent-producing bacterium Clostridium acetobutylicum.</title>
        <authorList>
            <person name="Noelling J."/>
            <person name="Breton G."/>
            <person name="Omelchenko M.V."/>
            <person name="Makarova K.S."/>
            <person name="Zeng Q."/>
            <person name="Gibson R."/>
            <person name="Lee H.M."/>
            <person name="Dubois J."/>
            <person name="Qiu D."/>
            <person name="Hitti J."/>
            <person name="Wolf Y.I."/>
            <person name="Tatusov R.L."/>
            <person name="Sabathe F."/>
            <person name="Doucette-Stamm L.A."/>
            <person name="Soucaille P."/>
            <person name="Daly M.J."/>
            <person name="Bennett G.N."/>
            <person name="Koonin E.V."/>
            <person name="Smith D.R."/>
        </authorList>
    </citation>
    <scope>NUCLEOTIDE SEQUENCE [LARGE SCALE GENOMIC DNA]</scope>
    <source>
        <strain>ATCC 824 / DSM 792 / JCM 1419 / IAM 19013 / LMG 5710 / NBRC 13948 / NRRL B-527 / VKM B-1787 / 2291 / W</strain>
    </source>
</reference>
<keyword id="KW-0413">Isomerase</keyword>
<keyword id="KW-0460">Magnesium</keyword>
<keyword id="KW-0479">Metal-binding</keyword>
<keyword id="KW-0597">Phosphoprotein</keyword>
<keyword id="KW-1185">Reference proteome</keyword>
<feature type="chain" id="PRO_0000147873" description="Phosphoglucosamine mutase">
    <location>
        <begin position="1"/>
        <end position="448"/>
    </location>
</feature>
<feature type="active site" description="Phosphoserine intermediate" evidence="1">
    <location>
        <position position="100"/>
    </location>
</feature>
<feature type="binding site" description="via phosphate group" evidence="1">
    <location>
        <position position="100"/>
    </location>
    <ligand>
        <name>Mg(2+)</name>
        <dbReference type="ChEBI" id="CHEBI:18420"/>
    </ligand>
</feature>
<feature type="binding site" evidence="1">
    <location>
        <position position="240"/>
    </location>
    <ligand>
        <name>Mg(2+)</name>
        <dbReference type="ChEBI" id="CHEBI:18420"/>
    </ligand>
</feature>
<feature type="binding site" evidence="1">
    <location>
        <position position="242"/>
    </location>
    <ligand>
        <name>Mg(2+)</name>
        <dbReference type="ChEBI" id="CHEBI:18420"/>
    </ligand>
</feature>
<feature type="binding site" evidence="1">
    <location>
        <position position="244"/>
    </location>
    <ligand>
        <name>Mg(2+)</name>
        <dbReference type="ChEBI" id="CHEBI:18420"/>
    </ligand>
</feature>
<feature type="modified residue" description="Phosphoserine" evidence="1">
    <location>
        <position position="100"/>
    </location>
</feature>
<sequence>MGRMFGTDGVRGIANKELTAELAYRLGRAGAYVLTNETHKPKILVGMDTRISGDMLEAALVSGILSVGAEAVCVGIVPTPAVAYLTRKYKADAGVVISASHNPVEYNGIKFFDAKGYKLSDNLEDEIQKIIESDFEGVPLPTGESVGRKVVEESAEEDYIKFAKSTIGTDLKGMKIALDCANGAAYKTAVKTFRELGAQVTVINNDPDGININCNCGSTHPEELMDYVVKKNCDLGLAFDGDADRCLAVDEKGNLIDGDFIMAICGKYLKDKGELHKDVVVVTVMSNMGLFLALDKANIKTVKTKVGDRYVLEEMLKEGYKLGGEQSGHIIFLDYNTTGDGLVTALKICSIVKESRKTLSKLASIMHKLPQVLANAKVPNNKKDIYLEDKEISDEIKKIEEELHGKGRVLIRPSGTEPLVRVMLEGEDQDRLNTLAHGLAELIEKKAN</sequence>
<proteinExistence type="inferred from homology"/>
<accession>Q97LS0</accession>
<gene>
    <name evidence="1" type="primary">glmM</name>
    <name type="ordered locus">CA_C0484</name>
</gene>
<evidence type="ECO:0000255" key="1">
    <source>
        <dbReference type="HAMAP-Rule" id="MF_01554"/>
    </source>
</evidence>